<sequence>MQLNSTEISELIKKRIAQFDVVSEARNTGTIVSVSDGIIRIHGLSDVMQGEMIALPGNRYAMALNLERDSVGAVVMGPYADLAEGMEVQCTGRILEVPVGRGLLGRVVNTLGQPIDGKGEIENDGFSPVEVIAPGVIDRRSVDQPVQTGYKAVDSMVPIGRGQRELIIGDRQTGKTALAIDAIINQRNSGIKCIYVAIGQKASTIANVVRKLEEHGALANTIVVAASASESAALQYLAPYAGCAMGEYFRDRGEDALIVYDDLSKQAVAYRQISLLLRRPPGREAYPGDVFYLHSRLLERASRVNEDYVEKFTKGEVKGKTGSLTALPIIETQAGDVSAFVPTNVISITDGQIFLESNLFNSGIRPAVNPGISVSRVGGSAQTKVIKKLAGGIRTALAQYRELAAFAQFASDLDDATRKQLSHGEKVTELLKQKQFTPLSVAEQAVILFAVEFGYLDDVELSKIASFETALLDYSNRNHAEFMQELNKTGNYNDEIKDTLKSILDGFKANSAW</sequence>
<dbReference type="EC" id="7.1.2.2" evidence="1"/>
<dbReference type="EMBL" id="L42023">
    <property type="protein sequence ID" value="AAC22139.1"/>
    <property type="molecule type" value="Genomic_DNA"/>
</dbReference>
<dbReference type="PIR" id="F64071">
    <property type="entry name" value="F64071"/>
</dbReference>
<dbReference type="RefSeq" id="NP_438641.1">
    <property type="nucleotide sequence ID" value="NC_000907.1"/>
</dbReference>
<dbReference type="SMR" id="P43714"/>
<dbReference type="STRING" id="71421.HI_0481"/>
<dbReference type="EnsemblBacteria" id="AAC22139">
    <property type="protein sequence ID" value="AAC22139"/>
    <property type="gene ID" value="HI_0481"/>
</dbReference>
<dbReference type="KEGG" id="hin:HI_0481"/>
<dbReference type="PATRIC" id="fig|71421.8.peg.500"/>
<dbReference type="eggNOG" id="COG0056">
    <property type="taxonomic scope" value="Bacteria"/>
</dbReference>
<dbReference type="HOGENOM" id="CLU_010091_2_1_6"/>
<dbReference type="OrthoDB" id="9803053at2"/>
<dbReference type="PhylomeDB" id="P43714"/>
<dbReference type="BioCyc" id="HINF71421:G1GJ1-496-MONOMER"/>
<dbReference type="Proteomes" id="UP000000579">
    <property type="component" value="Chromosome"/>
</dbReference>
<dbReference type="GO" id="GO:0005886">
    <property type="term" value="C:plasma membrane"/>
    <property type="evidence" value="ECO:0007669"/>
    <property type="project" value="UniProtKB-SubCell"/>
</dbReference>
<dbReference type="GO" id="GO:0045259">
    <property type="term" value="C:proton-transporting ATP synthase complex"/>
    <property type="evidence" value="ECO:0007669"/>
    <property type="project" value="UniProtKB-KW"/>
</dbReference>
<dbReference type="GO" id="GO:0043531">
    <property type="term" value="F:ADP binding"/>
    <property type="evidence" value="ECO:0000318"/>
    <property type="project" value="GO_Central"/>
</dbReference>
<dbReference type="GO" id="GO:0005524">
    <property type="term" value="F:ATP binding"/>
    <property type="evidence" value="ECO:0000318"/>
    <property type="project" value="GO_Central"/>
</dbReference>
<dbReference type="GO" id="GO:0046933">
    <property type="term" value="F:proton-transporting ATP synthase activity, rotational mechanism"/>
    <property type="evidence" value="ECO:0007669"/>
    <property type="project" value="UniProtKB-UniRule"/>
</dbReference>
<dbReference type="GO" id="GO:0015986">
    <property type="term" value="P:proton motive force-driven ATP synthesis"/>
    <property type="evidence" value="ECO:0000318"/>
    <property type="project" value="GO_Central"/>
</dbReference>
<dbReference type="CDD" id="cd18113">
    <property type="entry name" value="ATP-synt_F1_alpha_C"/>
    <property type="match status" value="1"/>
</dbReference>
<dbReference type="CDD" id="cd18116">
    <property type="entry name" value="ATP-synt_F1_alpha_N"/>
    <property type="match status" value="1"/>
</dbReference>
<dbReference type="CDD" id="cd01132">
    <property type="entry name" value="F1-ATPase_alpha_CD"/>
    <property type="match status" value="1"/>
</dbReference>
<dbReference type="FunFam" id="1.20.150.20:FF:000001">
    <property type="entry name" value="ATP synthase subunit alpha"/>
    <property type="match status" value="1"/>
</dbReference>
<dbReference type="FunFam" id="2.40.30.20:FF:000001">
    <property type="entry name" value="ATP synthase subunit alpha"/>
    <property type="match status" value="1"/>
</dbReference>
<dbReference type="FunFam" id="3.40.50.300:FF:000002">
    <property type="entry name" value="ATP synthase subunit alpha"/>
    <property type="match status" value="1"/>
</dbReference>
<dbReference type="Gene3D" id="2.40.30.20">
    <property type="match status" value="1"/>
</dbReference>
<dbReference type="Gene3D" id="1.20.150.20">
    <property type="entry name" value="ATP synthase alpha/beta chain, C-terminal domain"/>
    <property type="match status" value="1"/>
</dbReference>
<dbReference type="Gene3D" id="3.40.50.300">
    <property type="entry name" value="P-loop containing nucleotide triphosphate hydrolases"/>
    <property type="match status" value="1"/>
</dbReference>
<dbReference type="HAMAP" id="MF_01346">
    <property type="entry name" value="ATP_synth_alpha_bact"/>
    <property type="match status" value="1"/>
</dbReference>
<dbReference type="InterPro" id="IPR023366">
    <property type="entry name" value="ATP_synth_asu-like_sf"/>
</dbReference>
<dbReference type="InterPro" id="IPR000793">
    <property type="entry name" value="ATP_synth_asu_C"/>
</dbReference>
<dbReference type="InterPro" id="IPR038376">
    <property type="entry name" value="ATP_synth_asu_C_sf"/>
</dbReference>
<dbReference type="InterPro" id="IPR033732">
    <property type="entry name" value="ATP_synth_F1_a_nt-bd_dom"/>
</dbReference>
<dbReference type="InterPro" id="IPR005294">
    <property type="entry name" value="ATP_synth_F1_asu"/>
</dbReference>
<dbReference type="InterPro" id="IPR020003">
    <property type="entry name" value="ATPase_a/bsu_AS"/>
</dbReference>
<dbReference type="InterPro" id="IPR004100">
    <property type="entry name" value="ATPase_F1/V1/A1_a/bsu_N"/>
</dbReference>
<dbReference type="InterPro" id="IPR036121">
    <property type="entry name" value="ATPase_F1/V1/A1_a/bsu_N_sf"/>
</dbReference>
<dbReference type="InterPro" id="IPR000194">
    <property type="entry name" value="ATPase_F1/V1/A1_a/bsu_nucl-bd"/>
</dbReference>
<dbReference type="InterPro" id="IPR027417">
    <property type="entry name" value="P-loop_NTPase"/>
</dbReference>
<dbReference type="NCBIfam" id="TIGR00962">
    <property type="entry name" value="atpA"/>
    <property type="match status" value="1"/>
</dbReference>
<dbReference type="NCBIfam" id="NF009884">
    <property type="entry name" value="PRK13343.1"/>
    <property type="match status" value="1"/>
</dbReference>
<dbReference type="PANTHER" id="PTHR48082">
    <property type="entry name" value="ATP SYNTHASE SUBUNIT ALPHA, MITOCHONDRIAL"/>
    <property type="match status" value="1"/>
</dbReference>
<dbReference type="PANTHER" id="PTHR48082:SF2">
    <property type="entry name" value="ATP SYNTHASE SUBUNIT ALPHA, MITOCHONDRIAL"/>
    <property type="match status" value="1"/>
</dbReference>
<dbReference type="Pfam" id="PF00006">
    <property type="entry name" value="ATP-synt_ab"/>
    <property type="match status" value="1"/>
</dbReference>
<dbReference type="Pfam" id="PF00306">
    <property type="entry name" value="ATP-synt_ab_C"/>
    <property type="match status" value="1"/>
</dbReference>
<dbReference type="Pfam" id="PF02874">
    <property type="entry name" value="ATP-synt_ab_N"/>
    <property type="match status" value="1"/>
</dbReference>
<dbReference type="PIRSF" id="PIRSF039088">
    <property type="entry name" value="F_ATPase_subunit_alpha"/>
    <property type="match status" value="1"/>
</dbReference>
<dbReference type="SUPFAM" id="SSF47917">
    <property type="entry name" value="C-terminal domain of alpha and beta subunits of F1 ATP synthase"/>
    <property type="match status" value="1"/>
</dbReference>
<dbReference type="SUPFAM" id="SSF50615">
    <property type="entry name" value="N-terminal domain of alpha and beta subunits of F1 ATP synthase"/>
    <property type="match status" value="1"/>
</dbReference>
<dbReference type="SUPFAM" id="SSF52540">
    <property type="entry name" value="P-loop containing nucleoside triphosphate hydrolases"/>
    <property type="match status" value="1"/>
</dbReference>
<dbReference type="PROSITE" id="PS00152">
    <property type="entry name" value="ATPASE_ALPHA_BETA"/>
    <property type="match status" value="1"/>
</dbReference>
<comment type="function">
    <text evidence="1">Produces ATP from ADP in the presence of a proton gradient across the membrane. The alpha chain is a regulatory subunit.</text>
</comment>
<comment type="catalytic activity">
    <reaction evidence="1">
        <text>ATP + H2O + 4 H(+)(in) = ADP + phosphate + 5 H(+)(out)</text>
        <dbReference type="Rhea" id="RHEA:57720"/>
        <dbReference type="ChEBI" id="CHEBI:15377"/>
        <dbReference type="ChEBI" id="CHEBI:15378"/>
        <dbReference type="ChEBI" id="CHEBI:30616"/>
        <dbReference type="ChEBI" id="CHEBI:43474"/>
        <dbReference type="ChEBI" id="CHEBI:456216"/>
        <dbReference type="EC" id="7.1.2.2"/>
    </reaction>
</comment>
<comment type="subunit">
    <text evidence="1">F-type ATPases have 2 components, CF(1) - the catalytic core - and CF(0) - the membrane proton channel. CF(1) has five subunits: alpha(3), beta(3), gamma(1), delta(1), epsilon(1). CF(0) has three main subunits: a(1), b(2) and c(9-12). The alpha and beta chains form an alternating ring which encloses part of the gamma chain. CF(1) is attached to CF(0) by a central stalk formed by the gamma and epsilon chains, while a peripheral stalk is formed by the delta and b chains.</text>
</comment>
<comment type="subcellular location">
    <subcellularLocation>
        <location evidence="1">Cell inner membrane</location>
        <topology evidence="1">Peripheral membrane protein</topology>
    </subcellularLocation>
</comment>
<comment type="similarity">
    <text evidence="1">Belongs to the ATPase alpha/beta chains family.</text>
</comment>
<evidence type="ECO:0000255" key="1">
    <source>
        <dbReference type="HAMAP-Rule" id="MF_01346"/>
    </source>
</evidence>
<protein>
    <recommendedName>
        <fullName evidence="1">ATP synthase subunit alpha</fullName>
        <ecNumber evidence="1">7.1.2.2</ecNumber>
    </recommendedName>
    <alternativeName>
        <fullName evidence="1">ATP synthase F1 sector subunit alpha</fullName>
    </alternativeName>
    <alternativeName>
        <fullName evidence="1">F-ATPase subunit alpha</fullName>
    </alternativeName>
</protein>
<organism>
    <name type="scientific">Haemophilus influenzae (strain ATCC 51907 / DSM 11121 / KW20 / Rd)</name>
    <dbReference type="NCBI Taxonomy" id="71421"/>
    <lineage>
        <taxon>Bacteria</taxon>
        <taxon>Pseudomonadati</taxon>
        <taxon>Pseudomonadota</taxon>
        <taxon>Gammaproteobacteria</taxon>
        <taxon>Pasteurellales</taxon>
        <taxon>Pasteurellaceae</taxon>
        <taxon>Haemophilus</taxon>
    </lineage>
</organism>
<name>ATPA_HAEIN</name>
<proteinExistence type="inferred from homology"/>
<accession>P43714</accession>
<keyword id="KW-0066">ATP synthesis</keyword>
<keyword id="KW-0067">ATP-binding</keyword>
<keyword id="KW-0997">Cell inner membrane</keyword>
<keyword id="KW-1003">Cell membrane</keyword>
<keyword id="KW-0139">CF(1)</keyword>
<keyword id="KW-0375">Hydrogen ion transport</keyword>
<keyword id="KW-0406">Ion transport</keyword>
<keyword id="KW-0472">Membrane</keyword>
<keyword id="KW-0547">Nucleotide-binding</keyword>
<keyword id="KW-1185">Reference proteome</keyword>
<keyword id="KW-1278">Translocase</keyword>
<keyword id="KW-0813">Transport</keyword>
<reference key="1">
    <citation type="journal article" date="1995" name="Science">
        <title>Whole-genome random sequencing and assembly of Haemophilus influenzae Rd.</title>
        <authorList>
            <person name="Fleischmann R.D."/>
            <person name="Adams M.D."/>
            <person name="White O."/>
            <person name="Clayton R.A."/>
            <person name="Kirkness E.F."/>
            <person name="Kerlavage A.R."/>
            <person name="Bult C.J."/>
            <person name="Tomb J.-F."/>
            <person name="Dougherty B.A."/>
            <person name="Merrick J.M."/>
            <person name="McKenney K."/>
            <person name="Sutton G.G."/>
            <person name="FitzHugh W."/>
            <person name="Fields C.A."/>
            <person name="Gocayne J.D."/>
            <person name="Scott J.D."/>
            <person name="Shirley R."/>
            <person name="Liu L.-I."/>
            <person name="Glodek A."/>
            <person name="Kelley J.M."/>
            <person name="Weidman J.F."/>
            <person name="Phillips C.A."/>
            <person name="Spriggs T."/>
            <person name="Hedblom E."/>
            <person name="Cotton M.D."/>
            <person name="Utterback T.R."/>
            <person name="Hanna M.C."/>
            <person name="Nguyen D.T."/>
            <person name="Saudek D.M."/>
            <person name="Brandon R.C."/>
            <person name="Fine L.D."/>
            <person name="Fritchman J.L."/>
            <person name="Fuhrmann J.L."/>
            <person name="Geoghagen N.S.M."/>
            <person name="Gnehm C.L."/>
            <person name="McDonald L.A."/>
            <person name="Small K.V."/>
            <person name="Fraser C.M."/>
            <person name="Smith H.O."/>
            <person name="Venter J.C."/>
        </authorList>
    </citation>
    <scope>NUCLEOTIDE SEQUENCE [LARGE SCALE GENOMIC DNA]</scope>
    <source>
        <strain>ATCC 51907 / DSM 11121 / KW20 / Rd</strain>
    </source>
</reference>
<gene>
    <name evidence="1" type="primary">atpA</name>
    <name type="ordered locus">HI_0481</name>
</gene>
<feature type="chain" id="PRO_0000144329" description="ATP synthase subunit alpha">
    <location>
        <begin position="1"/>
        <end position="513"/>
    </location>
</feature>
<feature type="binding site" evidence="1">
    <location>
        <begin position="169"/>
        <end position="176"/>
    </location>
    <ligand>
        <name>ATP</name>
        <dbReference type="ChEBI" id="CHEBI:30616"/>
    </ligand>
</feature>
<feature type="site" description="Required for activity" evidence="1">
    <location>
        <position position="373"/>
    </location>
</feature>